<proteinExistence type="inferred from homology"/>
<keyword id="KW-0067">ATP-binding</keyword>
<keyword id="KW-0963">Cytoplasm</keyword>
<keyword id="KW-0275">Fatty acid biosynthesis</keyword>
<keyword id="KW-0276">Fatty acid metabolism</keyword>
<keyword id="KW-0444">Lipid biosynthesis</keyword>
<keyword id="KW-0443">Lipid metabolism</keyword>
<keyword id="KW-0547">Nucleotide-binding</keyword>
<keyword id="KW-0808">Transferase</keyword>
<gene>
    <name evidence="1" type="primary">accA</name>
    <name type="ordered locus">Cbei_1077</name>
</gene>
<name>ACCA_CLOB8</name>
<protein>
    <recommendedName>
        <fullName evidence="1">Acetyl-coenzyme A carboxylase carboxyl transferase subunit alpha</fullName>
        <shortName evidence="1">ACCase subunit alpha</shortName>
        <shortName evidence="1">Acetyl-CoA carboxylase carboxyltransferase subunit alpha</shortName>
        <ecNumber evidence="1">2.1.3.15</ecNumber>
    </recommendedName>
</protein>
<reference key="1">
    <citation type="submission" date="2007-06" db="EMBL/GenBank/DDBJ databases">
        <title>Complete sequence of Clostridium beijerinckii NCIMB 8052.</title>
        <authorList>
            <consortium name="US DOE Joint Genome Institute"/>
            <person name="Copeland A."/>
            <person name="Lucas S."/>
            <person name="Lapidus A."/>
            <person name="Barry K."/>
            <person name="Detter J.C."/>
            <person name="Glavina del Rio T."/>
            <person name="Hammon N."/>
            <person name="Israni S."/>
            <person name="Dalin E."/>
            <person name="Tice H."/>
            <person name="Pitluck S."/>
            <person name="Sims D."/>
            <person name="Brettin T."/>
            <person name="Bruce D."/>
            <person name="Tapia R."/>
            <person name="Brainard J."/>
            <person name="Schmutz J."/>
            <person name="Larimer F."/>
            <person name="Land M."/>
            <person name="Hauser L."/>
            <person name="Kyrpides N."/>
            <person name="Mikhailova N."/>
            <person name="Bennet G."/>
            <person name="Cann I."/>
            <person name="Chen J.-S."/>
            <person name="Contreras A.L."/>
            <person name="Jones D."/>
            <person name="Kashket E."/>
            <person name="Mitchell W."/>
            <person name="Stoddard S."/>
            <person name="Schwarz W."/>
            <person name="Qureshi N."/>
            <person name="Young M."/>
            <person name="Shi Z."/>
            <person name="Ezeji T."/>
            <person name="White B."/>
            <person name="Blaschek H."/>
            <person name="Richardson P."/>
        </authorList>
    </citation>
    <scope>NUCLEOTIDE SEQUENCE [LARGE SCALE GENOMIC DNA]</scope>
    <source>
        <strain>ATCC 51743 / NCIMB 8052</strain>
    </source>
</reference>
<organism>
    <name type="scientific">Clostridium beijerinckii (strain ATCC 51743 / NCIMB 8052)</name>
    <name type="common">Clostridium acetobutylicum</name>
    <dbReference type="NCBI Taxonomy" id="290402"/>
    <lineage>
        <taxon>Bacteria</taxon>
        <taxon>Bacillati</taxon>
        <taxon>Bacillota</taxon>
        <taxon>Clostridia</taxon>
        <taxon>Eubacteriales</taxon>
        <taxon>Clostridiaceae</taxon>
        <taxon>Clostridium</taxon>
    </lineage>
</organism>
<comment type="function">
    <text evidence="1">Component of the acetyl coenzyme A carboxylase (ACC) complex. First, biotin carboxylase catalyzes the carboxylation of biotin on its carrier protein (BCCP) and then the CO(2) group is transferred by the carboxyltransferase to acetyl-CoA to form malonyl-CoA.</text>
</comment>
<comment type="catalytic activity">
    <reaction evidence="1">
        <text>N(6)-carboxybiotinyl-L-lysyl-[protein] + acetyl-CoA = N(6)-biotinyl-L-lysyl-[protein] + malonyl-CoA</text>
        <dbReference type="Rhea" id="RHEA:54728"/>
        <dbReference type="Rhea" id="RHEA-COMP:10505"/>
        <dbReference type="Rhea" id="RHEA-COMP:10506"/>
        <dbReference type="ChEBI" id="CHEBI:57288"/>
        <dbReference type="ChEBI" id="CHEBI:57384"/>
        <dbReference type="ChEBI" id="CHEBI:83144"/>
        <dbReference type="ChEBI" id="CHEBI:83145"/>
        <dbReference type="EC" id="2.1.3.15"/>
    </reaction>
</comment>
<comment type="pathway">
    <text evidence="1">Lipid metabolism; malonyl-CoA biosynthesis; malonyl-CoA from acetyl-CoA: step 1/1.</text>
</comment>
<comment type="subunit">
    <text evidence="1">Acetyl-CoA carboxylase is a heterohexamer composed of biotin carboxyl carrier protein (AccB), biotin carboxylase (AccC) and two subunits each of ACCase subunit alpha (AccA) and ACCase subunit beta (AccD).</text>
</comment>
<comment type="subcellular location">
    <subcellularLocation>
        <location evidence="1">Cytoplasm</location>
    </subcellularLocation>
</comment>
<comment type="similarity">
    <text evidence="1">Belongs to the AccA family.</text>
</comment>
<evidence type="ECO:0000255" key="1">
    <source>
        <dbReference type="HAMAP-Rule" id="MF_00823"/>
    </source>
</evidence>
<evidence type="ECO:0000255" key="2">
    <source>
        <dbReference type="PROSITE-ProRule" id="PRU01137"/>
    </source>
</evidence>
<dbReference type="EC" id="2.1.3.15" evidence="1"/>
<dbReference type="EMBL" id="CP000721">
    <property type="protein sequence ID" value="ABR33261.1"/>
    <property type="molecule type" value="Genomic_DNA"/>
</dbReference>
<dbReference type="RefSeq" id="WP_011968420.1">
    <property type="nucleotide sequence ID" value="NC_009617.1"/>
</dbReference>
<dbReference type="SMR" id="A6LSD1"/>
<dbReference type="KEGG" id="cbe:Cbei_1077"/>
<dbReference type="eggNOG" id="COG0825">
    <property type="taxonomic scope" value="Bacteria"/>
</dbReference>
<dbReference type="HOGENOM" id="CLU_015486_0_2_9"/>
<dbReference type="UniPathway" id="UPA00655">
    <property type="reaction ID" value="UER00711"/>
</dbReference>
<dbReference type="Proteomes" id="UP000000565">
    <property type="component" value="Chromosome"/>
</dbReference>
<dbReference type="GO" id="GO:0009317">
    <property type="term" value="C:acetyl-CoA carboxylase complex"/>
    <property type="evidence" value="ECO:0007669"/>
    <property type="project" value="InterPro"/>
</dbReference>
<dbReference type="GO" id="GO:0003989">
    <property type="term" value="F:acetyl-CoA carboxylase activity"/>
    <property type="evidence" value="ECO:0007669"/>
    <property type="project" value="InterPro"/>
</dbReference>
<dbReference type="GO" id="GO:0005524">
    <property type="term" value="F:ATP binding"/>
    <property type="evidence" value="ECO:0007669"/>
    <property type="project" value="UniProtKB-KW"/>
</dbReference>
<dbReference type="GO" id="GO:0016743">
    <property type="term" value="F:carboxyl- or carbamoyltransferase activity"/>
    <property type="evidence" value="ECO:0007669"/>
    <property type="project" value="UniProtKB-UniRule"/>
</dbReference>
<dbReference type="GO" id="GO:0006633">
    <property type="term" value="P:fatty acid biosynthetic process"/>
    <property type="evidence" value="ECO:0007669"/>
    <property type="project" value="UniProtKB-KW"/>
</dbReference>
<dbReference type="GO" id="GO:2001295">
    <property type="term" value="P:malonyl-CoA biosynthetic process"/>
    <property type="evidence" value="ECO:0007669"/>
    <property type="project" value="UniProtKB-UniRule"/>
</dbReference>
<dbReference type="Gene3D" id="3.90.226.10">
    <property type="entry name" value="2-enoyl-CoA Hydratase, Chain A, domain 1"/>
    <property type="match status" value="1"/>
</dbReference>
<dbReference type="HAMAP" id="MF_00823">
    <property type="entry name" value="AcetylCoA_CT_alpha"/>
    <property type="match status" value="1"/>
</dbReference>
<dbReference type="InterPro" id="IPR001095">
    <property type="entry name" value="Acetyl_CoA_COase_a_su"/>
</dbReference>
<dbReference type="InterPro" id="IPR029045">
    <property type="entry name" value="ClpP/crotonase-like_dom_sf"/>
</dbReference>
<dbReference type="InterPro" id="IPR011763">
    <property type="entry name" value="COA_CT_C"/>
</dbReference>
<dbReference type="NCBIfam" id="TIGR00513">
    <property type="entry name" value="accA"/>
    <property type="match status" value="1"/>
</dbReference>
<dbReference type="NCBIfam" id="NF041504">
    <property type="entry name" value="AccA_sub"/>
    <property type="match status" value="1"/>
</dbReference>
<dbReference type="NCBIfam" id="NF004344">
    <property type="entry name" value="PRK05724.1"/>
    <property type="match status" value="1"/>
</dbReference>
<dbReference type="PANTHER" id="PTHR42853">
    <property type="entry name" value="ACETYL-COENZYME A CARBOXYLASE CARBOXYL TRANSFERASE SUBUNIT ALPHA"/>
    <property type="match status" value="1"/>
</dbReference>
<dbReference type="PANTHER" id="PTHR42853:SF3">
    <property type="entry name" value="ACETYL-COENZYME A CARBOXYLASE CARBOXYL TRANSFERASE SUBUNIT ALPHA, CHLOROPLASTIC"/>
    <property type="match status" value="1"/>
</dbReference>
<dbReference type="Pfam" id="PF03255">
    <property type="entry name" value="ACCA"/>
    <property type="match status" value="1"/>
</dbReference>
<dbReference type="PRINTS" id="PR01069">
    <property type="entry name" value="ACCCTRFRASEA"/>
</dbReference>
<dbReference type="SUPFAM" id="SSF52096">
    <property type="entry name" value="ClpP/crotonase"/>
    <property type="match status" value="1"/>
</dbReference>
<dbReference type="PROSITE" id="PS50989">
    <property type="entry name" value="COA_CT_CTER"/>
    <property type="match status" value="1"/>
</dbReference>
<sequence>MDKDFMKINVTPWESVEIARHKDRPSGQYYIETIFKDFIEFHGDRNFGDDQAIIGGIASINDINVTVIAITKGSNTSEYIKRNFGMPNPEGYRKALRLMKQAEKFKRPIICFIDTMGAFPGMGAEERGQGQAIANNLFELSRLKTPIISIITGEGESGGALALAVADKIFMLEHSIYSVLSPEGFASILWKDPSRVKEAAAVAKITAKDLKGFDIIDGIVKEPRGGAHKNPVKTAEVLKKTIVDSLLELKEKDLNELIDNRYNKFRDMGNFY</sequence>
<accession>A6LSD1</accession>
<feature type="chain" id="PRO_1000134474" description="Acetyl-coenzyme A carboxylase carboxyl transferase subunit alpha">
    <location>
        <begin position="1"/>
        <end position="272"/>
    </location>
</feature>
<feature type="domain" description="CoA carboxyltransferase C-terminal" evidence="2">
    <location>
        <begin position="1"/>
        <end position="248"/>
    </location>
</feature>